<proteinExistence type="inferred from homology"/>
<organism>
    <name type="scientific">Mycoplasma genitalium (strain ATCC 33530 / DSM 19775 / NCTC 10195 / G37)</name>
    <name type="common">Mycoplasmoides genitalium</name>
    <dbReference type="NCBI Taxonomy" id="243273"/>
    <lineage>
        <taxon>Bacteria</taxon>
        <taxon>Bacillati</taxon>
        <taxon>Mycoplasmatota</taxon>
        <taxon>Mycoplasmoidales</taxon>
        <taxon>Mycoplasmoidaceae</taxon>
        <taxon>Mycoplasmoides</taxon>
    </lineage>
</organism>
<feature type="chain" id="PRO_0000113974" description="Transcription termination/antitermination protein NusG">
    <location>
        <begin position="1"/>
        <end position="316"/>
    </location>
</feature>
<feature type="sequence conflict" description="In Ref. 2." evidence="2" ref="2">
    <original>FL</original>
    <variation>LF</variation>
    <location>
        <begin position="240"/>
        <end position="241"/>
    </location>
</feature>
<protein>
    <recommendedName>
        <fullName evidence="1">Transcription termination/antitermination protein NusG</fullName>
    </recommendedName>
</protein>
<accession>P47300</accession>
<accession>Q49344</accession>
<name>NUSG_MYCGE</name>
<sequence length="316" mass="36323">MQASELTPKWYVAPVSIKDEAVVKNLKAKIQALGFNHEIVDVKVLKEREVHEEVYSLKSGKLPRSLKNTTFNKWFVLDDYRYLRVKISEKNLLGRYIYIKMIYSEDAWRIVRNFPGITGIVGSSGRGALPIPLDEKDANNLEQMLKGISINPSKRIMLTNTAIIEMDSDKFDEKFQYILKQKQAIQKPKEDEDSEIVDAEKLKEAFKKLQNSQEQDEWKEKATIIQSEQTKLDPSVLVPFLGKYEILDTDNKVEQLFEFSVGNLVEVHLTDTIHVQGQIKALYQGTVNKAVVEIELTSKTQLINLPLENLSFVEFE</sequence>
<keyword id="KW-1185">Reference proteome</keyword>
<keyword id="KW-0804">Transcription</keyword>
<keyword id="KW-0889">Transcription antitermination</keyword>
<keyword id="KW-0805">Transcription regulation</keyword>
<keyword id="KW-0806">Transcription termination</keyword>
<comment type="function">
    <text evidence="1">Participates in transcription elongation, termination and antitermination.</text>
</comment>
<comment type="similarity">
    <text evidence="1">Belongs to the NusG family.</text>
</comment>
<reference key="1">
    <citation type="journal article" date="1995" name="Science">
        <title>The minimal gene complement of Mycoplasma genitalium.</title>
        <authorList>
            <person name="Fraser C.M."/>
            <person name="Gocayne J.D."/>
            <person name="White O."/>
            <person name="Adams M.D."/>
            <person name="Clayton R.A."/>
            <person name="Fleischmann R.D."/>
            <person name="Bult C.J."/>
            <person name="Kerlavage A.R."/>
            <person name="Sutton G.G."/>
            <person name="Kelley J.M."/>
            <person name="Fritchman J.L."/>
            <person name="Weidman J.F."/>
            <person name="Small K.V."/>
            <person name="Sandusky M."/>
            <person name="Fuhrmann J.L."/>
            <person name="Nguyen D.T."/>
            <person name="Utterback T.R."/>
            <person name="Saudek D.M."/>
            <person name="Phillips C.A."/>
            <person name="Merrick J.M."/>
            <person name="Tomb J.-F."/>
            <person name="Dougherty B.A."/>
            <person name="Bott K.F."/>
            <person name="Hu P.-C."/>
            <person name="Lucier T.S."/>
            <person name="Peterson S.N."/>
            <person name="Smith H.O."/>
            <person name="Hutchison C.A. III"/>
            <person name="Venter J.C."/>
        </authorList>
    </citation>
    <scope>NUCLEOTIDE SEQUENCE [LARGE SCALE GENOMIC DNA]</scope>
    <source>
        <strain>ATCC 33530 / DSM 19775 / NCTC 10195 / G37</strain>
    </source>
</reference>
<reference key="2">
    <citation type="journal article" date="1993" name="J. Bacteriol.">
        <title>A survey of the Mycoplasma genitalium genome by using random sequencing.</title>
        <authorList>
            <person name="Peterson S.N."/>
            <person name="Hu P.-C."/>
            <person name="Bott K.F."/>
            <person name="Hutchison C.A. III"/>
        </authorList>
    </citation>
    <scope>NUCLEOTIDE SEQUENCE [GENOMIC DNA] OF 16-229 AND 240-316</scope>
    <source>
        <strain>ATCC 33530 / DSM 19775 / NCTC 10195 / G37</strain>
    </source>
</reference>
<gene>
    <name evidence="1" type="primary">nusG</name>
    <name type="ordered locus">MG054</name>
</gene>
<dbReference type="EMBL" id="L43967">
    <property type="protein sequence ID" value="AAC71270.1"/>
    <property type="molecule type" value="Genomic_DNA"/>
</dbReference>
<dbReference type="EMBL" id="U01710">
    <property type="protein sequence ID" value="AAB01022.1"/>
    <property type="molecule type" value="Genomic_DNA"/>
</dbReference>
<dbReference type="EMBL" id="U02236">
    <property type="protein sequence ID" value="AAA03388.1"/>
    <property type="molecule type" value="Genomic_DNA"/>
</dbReference>
<dbReference type="PIR" id="I64205">
    <property type="entry name" value="I64205"/>
</dbReference>
<dbReference type="RefSeq" id="WP_009885716.1">
    <property type="nucleotide sequence ID" value="NC_000908.2"/>
</dbReference>
<dbReference type="STRING" id="243273.MG_054"/>
<dbReference type="GeneID" id="88282170"/>
<dbReference type="KEGG" id="mge:MG_054"/>
<dbReference type="eggNOG" id="COG0250">
    <property type="taxonomic scope" value="Bacteria"/>
</dbReference>
<dbReference type="HOGENOM" id="CLU_879462_0_0_14"/>
<dbReference type="InParanoid" id="P47300"/>
<dbReference type="OrthoDB" id="9809075at2"/>
<dbReference type="BioCyc" id="MGEN243273:G1GJ2-55-MONOMER"/>
<dbReference type="Proteomes" id="UP000000807">
    <property type="component" value="Chromosome"/>
</dbReference>
<dbReference type="GO" id="GO:0005829">
    <property type="term" value="C:cytosol"/>
    <property type="evidence" value="ECO:0000318"/>
    <property type="project" value="GO_Central"/>
</dbReference>
<dbReference type="GO" id="GO:0006353">
    <property type="term" value="P:DNA-templated transcription termination"/>
    <property type="evidence" value="ECO:0007669"/>
    <property type="project" value="UniProtKB-UniRule"/>
</dbReference>
<dbReference type="GO" id="GO:0032784">
    <property type="term" value="P:regulation of DNA-templated transcription elongation"/>
    <property type="evidence" value="ECO:0007669"/>
    <property type="project" value="InterPro"/>
</dbReference>
<dbReference type="GO" id="GO:0031564">
    <property type="term" value="P:transcription antitermination"/>
    <property type="evidence" value="ECO:0007669"/>
    <property type="project" value="UniProtKB-UniRule"/>
</dbReference>
<dbReference type="GO" id="GO:0140673">
    <property type="term" value="P:transcription elongation-coupled chromatin remodeling"/>
    <property type="evidence" value="ECO:0007669"/>
    <property type="project" value="InterPro"/>
</dbReference>
<dbReference type="CDD" id="cd09891">
    <property type="entry name" value="NGN_Bact_1"/>
    <property type="match status" value="1"/>
</dbReference>
<dbReference type="Gene3D" id="3.30.70.940">
    <property type="entry name" value="NusG, N-terminal domain"/>
    <property type="match status" value="1"/>
</dbReference>
<dbReference type="HAMAP" id="MF_00948">
    <property type="entry name" value="NusG"/>
    <property type="match status" value="1"/>
</dbReference>
<dbReference type="InterPro" id="IPR047050">
    <property type="entry name" value="NGN"/>
</dbReference>
<dbReference type="InterPro" id="IPR006645">
    <property type="entry name" value="NGN-like_dom"/>
</dbReference>
<dbReference type="InterPro" id="IPR036735">
    <property type="entry name" value="NGN_dom_sf"/>
</dbReference>
<dbReference type="InterPro" id="IPR043425">
    <property type="entry name" value="NusG-like"/>
</dbReference>
<dbReference type="InterPro" id="IPR001062">
    <property type="entry name" value="Transcrpt_antiterm_NusG"/>
</dbReference>
<dbReference type="InterPro" id="IPR010216">
    <property type="entry name" value="Transcrpt_antiterm_NusG_myco"/>
</dbReference>
<dbReference type="NCBIfam" id="TIGR01956">
    <property type="entry name" value="NusG_myco"/>
    <property type="match status" value="1"/>
</dbReference>
<dbReference type="PANTHER" id="PTHR30265">
    <property type="entry name" value="RHO-INTERACTING TRANSCRIPTION TERMINATION FACTOR NUSG"/>
    <property type="match status" value="1"/>
</dbReference>
<dbReference type="PANTHER" id="PTHR30265:SF2">
    <property type="entry name" value="TRANSCRIPTION TERMINATION_ANTITERMINATION PROTEIN NUSG"/>
    <property type="match status" value="1"/>
</dbReference>
<dbReference type="Pfam" id="PF02357">
    <property type="entry name" value="NusG"/>
    <property type="match status" value="1"/>
</dbReference>
<dbReference type="SMART" id="SM00738">
    <property type="entry name" value="NGN"/>
    <property type="match status" value="1"/>
</dbReference>
<dbReference type="SUPFAM" id="SSF82679">
    <property type="entry name" value="N-utilization substance G protein NusG, N-terminal domain"/>
    <property type="match status" value="1"/>
</dbReference>
<evidence type="ECO:0000255" key="1">
    <source>
        <dbReference type="HAMAP-Rule" id="MF_00948"/>
    </source>
</evidence>
<evidence type="ECO:0000305" key="2"/>